<comment type="function">
    <text evidence="1">Catalyzes the conversion of 4-hydroxy-tetrahydrodipicolinate (HTPA) to tetrahydrodipicolinate.</text>
</comment>
<comment type="catalytic activity">
    <reaction evidence="1">
        <text>(S)-2,3,4,5-tetrahydrodipicolinate + NAD(+) + H2O = (2S,4S)-4-hydroxy-2,3,4,5-tetrahydrodipicolinate + NADH + H(+)</text>
        <dbReference type="Rhea" id="RHEA:35323"/>
        <dbReference type="ChEBI" id="CHEBI:15377"/>
        <dbReference type="ChEBI" id="CHEBI:15378"/>
        <dbReference type="ChEBI" id="CHEBI:16845"/>
        <dbReference type="ChEBI" id="CHEBI:57540"/>
        <dbReference type="ChEBI" id="CHEBI:57945"/>
        <dbReference type="ChEBI" id="CHEBI:67139"/>
        <dbReference type="EC" id="1.17.1.8"/>
    </reaction>
</comment>
<comment type="catalytic activity">
    <reaction evidence="1">
        <text>(S)-2,3,4,5-tetrahydrodipicolinate + NADP(+) + H2O = (2S,4S)-4-hydroxy-2,3,4,5-tetrahydrodipicolinate + NADPH + H(+)</text>
        <dbReference type="Rhea" id="RHEA:35331"/>
        <dbReference type="ChEBI" id="CHEBI:15377"/>
        <dbReference type="ChEBI" id="CHEBI:15378"/>
        <dbReference type="ChEBI" id="CHEBI:16845"/>
        <dbReference type="ChEBI" id="CHEBI:57783"/>
        <dbReference type="ChEBI" id="CHEBI:58349"/>
        <dbReference type="ChEBI" id="CHEBI:67139"/>
        <dbReference type="EC" id="1.17.1.8"/>
    </reaction>
</comment>
<comment type="pathway">
    <text evidence="1">Amino-acid biosynthesis; L-lysine biosynthesis via DAP pathway; (S)-tetrahydrodipicolinate from L-aspartate: step 4/4.</text>
</comment>
<comment type="subcellular location">
    <subcellularLocation>
        <location evidence="1">Cytoplasm</location>
    </subcellularLocation>
</comment>
<comment type="similarity">
    <text evidence="1">Belongs to the DapB family.</text>
</comment>
<comment type="caution">
    <text evidence="2">Was originally thought to be a dihydrodipicolinate reductase (DHDPR), catalyzing the conversion of dihydrodipicolinate to tetrahydrodipicolinate. However, it was shown in E.coli that the substrate of the enzymatic reaction is not dihydrodipicolinate (DHDP) but in fact (2S,4S)-4-hydroxy-2,3,4,5-tetrahydrodipicolinic acid (HTPA), the product released by the DapA-catalyzed reaction.</text>
</comment>
<reference key="1">
    <citation type="submission" date="2008-10" db="EMBL/GenBank/DDBJ databases">
        <title>Complete sequence of Desulfovibrio vulgaris str. 'Miyazaki F'.</title>
        <authorList>
            <person name="Lucas S."/>
            <person name="Copeland A."/>
            <person name="Lapidus A."/>
            <person name="Glavina del Rio T."/>
            <person name="Dalin E."/>
            <person name="Tice H."/>
            <person name="Bruce D."/>
            <person name="Goodwin L."/>
            <person name="Pitluck S."/>
            <person name="Sims D."/>
            <person name="Brettin T."/>
            <person name="Detter J.C."/>
            <person name="Han C."/>
            <person name="Larimer F."/>
            <person name="Land M."/>
            <person name="Hauser L."/>
            <person name="Kyrpides N."/>
            <person name="Mikhailova N."/>
            <person name="Hazen T.C."/>
            <person name="Richardson P."/>
        </authorList>
    </citation>
    <scope>NUCLEOTIDE SEQUENCE [LARGE SCALE GENOMIC DNA]</scope>
    <source>
        <strain>DSM 19637 / Miyazaki F</strain>
    </source>
</reference>
<name>DAPB_NITV9</name>
<sequence length="259" mass="27870">MSTSIIVTGAGGRMGSTICRMAQEDPVLTLAAVVERPERLASLDVWKCPSGSDPDAVFATVPGGVVVDFTSPEASMANARAAARAGVSHVIGTTGLTAEQKAELADLARTARIFWAPNMSIGVNVLLKILPQLVQQLGEQYDLEMVELHHNRKKDSPSGTALRLAECLAEARGWNLPDVANYHREGIIGERPKDEIGIQTIRGGDVVGVHTIYAMGPGERIEITHQAHSRENFAQGALRAAKWLPQQQPGTLYSMLDML</sequence>
<keyword id="KW-0028">Amino-acid biosynthesis</keyword>
<keyword id="KW-0963">Cytoplasm</keyword>
<keyword id="KW-0220">Diaminopimelate biosynthesis</keyword>
<keyword id="KW-0457">Lysine biosynthesis</keyword>
<keyword id="KW-0520">NAD</keyword>
<keyword id="KW-0521">NADP</keyword>
<keyword id="KW-0560">Oxidoreductase</keyword>
<evidence type="ECO:0000255" key="1">
    <source>
        <dbReference type="HAMAP-Rule" id="MF_00102"/>
    </source>
</evidence>
<evidence type="ECO:0000305" key="2"/>
<accession>B8DJT5</accession>
<feature type="chain" id="PRO_1000117365" description="4-hydroxy-tetrahydrodipicolinate reductase">
    <location>
        <begin position="1"/>
        <end position="259"/>
    </location>
</feature>
<feature type="active site" description="Proton donor/acceptor" evidence="1">
    <location>
        <position position="149"/>
    </location>
</feature>
<feature type="active site" description="Proton donor" evidence="1">
    <location>
        <position position="153"/>
    </location>
</feature>
<feature type="binding site" evidence="1">
    <location>
        <begin position="9"/>
        <end position="14"/>
    </location>
    <ligand>
        <name>NAD(+)</name>
        <dbReference type="ChEBI" id="CHEBI:57540"/>
    </ligand>
</feature>
<feature type="binding site" evidence="1">
    <location>
        <position position="35"/>
    </location>
    <ligand>
        <name>NAD(+)</name>
        <dbReference type="ChEBI" id="CHEBI:57540"/>
    </ligand>
</feature>
<feature type="binding site" evidence="1">
    <location>
        <position position="36"/>
    </location>
    <ligand>
        <name>NADP(+)</name>
        <dbReference type="ChEBI" id="CHEBI:58349"/>
    </ligand>
</feature>
<feature type="binding site" evidence="1">
    <location>
        <begin position="92"/>
        <end position="94"/>
    </location>
    <ligand>
        <name>NAD(+)</name>
        <dbReference type="ChEBI" id="CHEBI:57540"/>
    </ligand>
</feature>
<feature type="binding site" evidence="1">
    <location>
        <begin position="116"/>
        <end position="119"/>
    </location>
    <ligand>
        <name>NAD(+)</name>
        <dbReference type="ChEBI" id="CHEBI:57540"/>
    </ligand>
</feature>
<feature type="binding site" evidence="1">
    <location>
        <position position="150"/>
    </location>
    <ligand>
        <name>(S)-2,3,4,5-tetrahydrodipicolinate</name>
        <dbReference type="ChEBI" id="CHEBI:16845"/>
    </ligand>
</feature>
<feature type="binding site" evidence="1">
    <location>
        <begin position="159"/>
        <end position="160"/>
    </location>
    <ligand>
        <name>(S)-2,3,4,5-tetrahydrodipicolinate</name>
        <dbReference type="ChEBI" id="CHEBI:16845"/>
    </ligand>
</feature>
<dbReference type="EC" id="1.17.1.8" evidence="1"/>
<dbReference type="EMBL" id="CP001197">
    <property type="protein sequence ID" value="ACL07407.1"/>
    <property type="molecule type" value="Genomic_DNA"/>
</dbReference>
<dbReference type="SMR" id="B8DJT5"/>
<dbReference type="STRING" id="883.DvMF_0450"/>
<dbReference type="KEGG" id="dvm:DvMF_0450"/>
<dbReference type="eggNOG" id="COG0289">
    <property type="taxonomic scope" value="Bacteria"/>
</dbReference>
<dbReference type="HOGENOM" id="CLU_047479_2_1_7"/>
<dbReference type="OrthoDB" id="9790352at2"/>
<dbReference type="UniPathway" id="UPA00034">
    <property type="reaction ID" value="UER00018"/>
</dbReference>
<dbReference type="GO" id="GO:0005737">
    <property type="term" value="C:cytoplasm"/>
    <property type="evidence" value="ECO:0007669"/>
    <property type="project" value="UniProtKB-SubCell"/>
</dbReference>
<dbReference type="GO" id="GO:0008839">
    <property type="term" value="F:4-hydroxy-tetrahydrodipicolinate reductase"/>
    <property type="evidence" value="ECO:0007669"/>
    <property type="project" value="UniProtKB-EC"/>
</dbReference>
<dbReference type="GO" id="GO:0051287">
    <property type="term" value="F:NAD binding"/>
    <property type="evidence" value="ECO:0007669"/>
    <property type="project" value="UniProtKB-UniRule"/>
</dbReference>
<dbReference type="GO" id="GO:0050661">
    <property type="term" value="F:NADP binding"/>
    <property type="evidence" value="ECO:0007669"/>
    <property type="project" value="UniProtKB-UniRule"/>
</dbReference>
<dbReference type="GO" id="GO:0016726">
    <property type="term" value="F:oxidoreductase activity, acting on CH or CH2 groups, NAD or NADP as acceptor"/>
    <property type="evidence" value="ECO:0007669"/>
    <property type="project" value="UniProtKB-UniRule"/>
</dbReference>
<dbReference type="GO" id="GO:0019877">
    <property type="term" value="P:diaminopimelate biosynthetic process"/>
    <property type="evidence" value="ECO:0007669"/>
    <property type="project" value="UniProtKB-UniRule"/>
</dbReference>
<dbReference type="GO" id="GO:0009089">
    <property type="term" value="P:lysine biosynthetic process via diaminopimelate"/>
    <property type="evidence" value="ECO:0007669"/>
    <property type="project" value="UniProtKB-UniRule"/>
</dbReference>
<dbReference type="CDD" id="cd02274">
    <property type="entry name" value="DHDPR_N"/>
    <property type="match status" value="1"/>
</dbReference>
<dbReference type="FunFam" id="3.30.360.10:FF:000004">
    <property type="entry name" value="4-hydroxy-tetrahydrodipicolinate reductase"/>
    <property type="match status" value="1"/>
</dbReference>
<dbReference type="Gene3D" id="3.30.360.10">
    <property type="entry name" value="Dihydrodipicolinate Reductase, domain 2"/>
    <property type="match status" value="1"/>
</dbReference>
<dbReference type="Gene3D" id="3.40.50.720">
    <property type="entry name" value="NAD(P)-binding Rossmann-like Domain"/>
    <property type="match status" value="1"/>
</dbReference>
<dbReference type="HAMAP" id="MF_00102">
    <property type="entry name" value="DapB"/>
    <property type="match status" value="1"/>
</dbReference>
<dbReference type="InterPro" id="IPR022663">
    <property type="entry name" value="DapB_C"/>
</dbReference>
<dbReference type="InterPro" id="IPR000846">
    <property type="entry name" value="DapB_N"/>
</dbReference>
<dbReference type="InterPro" id="IPR023940">
    <property type="entry name" value="DHDPR_bac"/>
</dbReference>
<dbReference type="InterPro" id="IPR036291">
    <property type="entry name" value="NAD(P)-bd_dom_sf"/>
</dbReference>
<dbReference type="NCBIfam" id="TIGR00036">
    <property type="entry name" value="dapB"/>
    <property type="match status" value="1"/>
</dbReference>
<dbReference type="PANTHER" id="PTHR20836:SF0">
    <property type="entry name" value="4-HYDROXY-TETRAHYDRODIPICOLINATE REDUCTASE 1, CHLOROPLASTIC-RELATED"/>
    <property type="match status" value="1"/>
</dbReference>
<dbReference type="PANTHER" id="PTHR20836">
    <property type="entry name" value="DIHYDRODIPICOLINATE REDUCTASE"/>
    <property type="match status" value="1"/>
</dbReference>
<dbReference type="Pfam" id="PF05173">
    <property type="entry name" value="DapB_C"/>
    <property type="match status" value="1"/>
</dbReference>
<dbReference type="Pfam" id="PF01113">
    <property type="entry name" value="DapB_N"/>
    <property type="match status" value="1"/>
</dbReference>
<dbReference type="PIRSF" id="PIRSF000161">
    <property type="entry name" value="DHPR"/>
    <property type="match status" value="1"/>
</dbReference>
<dbReference type="SUPFAM" id="SSF55347">
    <property type="entry name" value="Glyceraldehyde-3-phosphate dehydrogenase-like, C-terminal domain"/>
    <property type="match status" value="1"/>
</dbReference>
<dbReference type="SUPFAM" id="SSF51735">
    <property type="entry name" value="NAD(P)-binding Rossmann-fold domains"/>
    <property type="match status" value="1"/>
</dbReference>
<gene>
    <name evidence="1" type="primary">dapB</name>
    <name type="ordered locus">DvMF_0450</name>
</gene>
<protein>
    <recommendedName>
        <fullName evidence="1">4-hydroxy-tetrahydrodipicolinate reductase</fullName>
        <shortName evidence="1">HTPA reductase</shortName>
        <ecNumber evidence="1">1.17.1.8</ecNumber>
    </recommendedName>
</protein>
<organism>
    <name type="scientific">Nitratidesulfovibrio vulgaris (strain DSM 19637 / Miyazaki F)</name>
    <name type="common">Desulfovibrio vulgaris</name>
    <dbReference type="NCBI Taxonomy" id="883"/>
    <lineage>
        <taxon>Bacteria</taxon>
        <taxon>Pseudomonadati</taxon>
        <taxon>Thermodesulfobacteriota</taxon>
        <taxon>Desulfovibrionia</taxon>
        <taxon>Desulfovibrionales</taxon>
        <taxon>Desulfovibrionaceae</taxon>
        <taxon>Nitratidesulfovibrio</taxon>
    </lineage>
</organism>
<proteinExistence type="inferred from homology"/>